<proteinExistence type="predicted"/>
<evidence type="ECO:0000305" key="1"/>
<feature type="chain" id="PRO_0000216856" description="Uncharacterized protein pXO2-60/BXB0074/GBAA_pXO2_0074">
    <location>
        <begin position="1"/>
        <end position="311"/>
    </location>
</feature>
<feature type="sequence variant" description="In strain: Pasteur.">
    <original>Y</original>
    <variation>C</variation>
    <location>
        <position position="151"/>
    </location>
</feature>
<dbReference type="EMBL" id="AF188935">
    <property type="protein sequence ID" value="AAF13665.1"/>
    <property type="status" value="ALT_INIT"/>
    <property type="molecule type" value="Genomic_DNA"/>
</dbReference>
<dbReference type="EMBL" id="AE011191">
    <property type="protein sequence ID" value="AAM26228.1"/>
    <property type="molecule type" value="Genomic_DNA"/>
</dbReference>
<dbReference type="EMBL" id="AE017335">
    <property type="protein sequence ID" value="AAT29004.2"/>
    <property type="molecule type" value="Genomic_DNA"/>
</dbReference>
<dbReference type="RefSeq" id="NP_053215.1">
    <property type="nucleotide sequence ID" value="NC_002146.1"/>
</dbReference>
<dbReference type="RefSeq" id="WP_000052062.1">
    <property type="nucleotide sequence ID" value="NZ_VTZL01000009.1"/>
</dbReference>
<dbReference type="GeneID" id="45025370"/>
<dbReference type="KEGG" id="banh:HYU01_29345"/>
<dbReference type="KEGG" id="bar:GBAA_pXO2_0074"/>
<dbReference type="HOGENOM" id="CLU_893237_0_0_9"/>
<dbReference type="Proteomes" id="UP000000594">
    <property type="component" value="Plasmid pXO2"/>
</dbReference>
<dbReference type="CDD" id="cd20223">
    <property type="entry name" value="PFM_epsilon-toxin-like"/>
    <property type="match status" value="1"/>
</dbReference>
<dbReference type="Gene3D" id="2.170.15.10">
    <property type="entry name" value="Proaerolysin, chain A, domain 3"/>
    <property type="match status" value="1"/>
</dbReference>
<dbReference type="InterPro" id="IPR004991">
    <property type="entry name" value="Aerolysin-like"/>
</dbReference>
<dbReference type="Pfam" id="PF03318">
    <property type="entry name" value="ETX_MTX2"/>
    <property type="match status" value="1"/>
</dbReference>
<dbReference type="SUPFAM" id="SSF56973">
    <property type="entry name" value="Aerolisin/ETX pore-forming domain"/>
    <property type="match status" value="1"/>
</dbReference>
<reference key="1">
    <citation type="journal article" date="1999" name="J. Appl. Microbiol.">
        <title>Sequence, assembly and analysis of pXO1 and pXO2.</title>
        <authorList>
            <person name="Okinaka R.T."/>
            <person name="Cloud K."/>
            <person name="Hampton O."/>
            <person name="Hoffmaster A."/>
            <person name="Hill K.K."/>
            <person name="Keim P."/>
            <person name="Koehler T."/>
            <person name="Lamke G."/>
            <person name="Kumano S."/>
            <person name="Manter D."/>
            <person name="Martinez Y."/>
            <person name="Ricke D."/>
            <person name="Svensson R."/>
            <person name="Jackson P.J."/>
        </authorList>
    </citation>
    <scope>NUCLEOTIDE SEQUENCE [GENOMIC DNA]</scope>
    <source>
        <strain>Pasteur</strain>
    </source>
</reference>
<reference key="2">
    <citation type="journal article" date="2002" name="Science">
        <title>Comparative genome sequencing for discovery of novel polymorphisms in Bacillus anthracis.</title>
        <authorList>
            <person name="Read T.D."/>
            <person name="Salzberg S.L."/>
            <person name="Pop M."/>
            <person name="Shumway M.F."/>
            <person name="Umayam L."/>
            <person name="Jiang L."/>
            <person name="Holtzapple E."/>
            <person name="Busch J.D."/>
            <person name="Smith K.L."/>
            <person name="Schupp J.M."/>
            <person name="Solomon D."/>
            <person name="Keim P."/>
            <person name="Fraser C.M."/>
        </authorList>
    </citation>
    <scope>NUCLEOTIDE SEQUENCE [GENOMIC DNA]</scope>
    <source>
        <strain>Ames / isolate Florida / A2012</strain>
    </source>
</reference>
<reference key="3">
    <citation type="journal article" date="2009" name="J. Bacteriol.">
        <title>The complete genome sequence of Bacillus anthracis Ames 'Ancestor'.</title>
        <authorList>
            <person name="Ravel J."/>
            <person name="Jiang L."/>
            <person name="Stanley S.T."/>
            <person name="Wilson M.R."/>
            <person name="Decker R.S."/>
            <person name="Read T.D."/>
            <person name="Worsham P."/>
            <person name="Keim P.S."/>
            <person name="Salzberg S.L."/>
            <person name="Fraser-Liggett C.M."/>
            <person name="Rasko D.A."/>
        </authorList>
    </citation>
    <scope>NUCLEOTIDE SEQUENCE [LARGE SCALE GENOMIC DNA]</scope>
    <source>
        <strain>Ames ancestor</strain>
    </source>
</reference>
<gene>
    <name type="ordered locus">pXO2-60</name>
    <name type="ordered locus">BXB0074</name>
    <name type="ordered locus">GBAA_pXO2_0074</name>
</gene>
<accession>Q9RMX3</accession>
<accession>Q8KYD4</accession>
<sequence length="311" mass="35259">MSLGTTDILQKPIAAHAHYVQSQSTDDVWKWVLDSRGKVTTTFVDVLNTSPGQVKEVIRFDVDNRNMGEAATFKTPQRTFKSVNSITKTSFKEFTFGQEVTGEFGVPYFKKLGVKLTAGQKFGENNSTLESTETTTQYGGDSITVPANKHYAIDYVFTTTNFSGKFQNKREIPGTSNIRVAGFWDPDTGTQRRSEKFLNEKTKYGVVKNLQIAYDELKNNPDQGNLFHDELLSRKNIKIHLGFTNGDDYYLKPEEVKEKILDRVYLDDDKKKVYVLEDAAEFNGQSGIDLSIKVIDRTNNTEKELPKILLF</sequence>
<geneLocation type="plasmid">
    <name>pXO2</name>
</geneLocation>
<comment type="sequence caution" evidence="1">
    <conflict type="erroneous initiation">
        <sequence resource="EMBL-CDS" id="AAF13665"/>
    </conflict>
</comment>
<protein>
    <recommendedName>
        <fullName>Uncharacterized protein pXO2-60/BXB0074/GBAA_pXO2_0074</fullName>
    </recommendedName>
</protein>
<organism>
    <name type="scientific">Bacillus anthracis</name>
    <dbReference type="NCBI Taxonomy" id="1392"/>
    <lineage>
        <taxon>Bacteria</taxon>
        <taxon>Bacillati</taxon>
        <taxon>Bacillota</taxon>
        <taxon>Bacilli</taxon>
        <taxon>Bacillales</taxon>
        <taxon>Bacillaceae</taxon>
        <taxon>Bacillus</taxon>
        <taxon>Bacillus cereus group</taxon>
    </lineage>
</organism>
<keyword id="KW-0614">Plasmid</keyword>
<keyword id="KW-1185">Reference proteome</keyword>
<name>Y6574_BACAN</name>